<name>RRF_ESCF3</name>
<proteinExistence type="inferred from homology"/>
<gene>
    <name evidence="1" type="primary">frr</name>
    <name type="ordered locus">EFER_0194</name>
</gene>
<dbReference type="EMBL" id="CU928158">
    <property type="protein sequence ID" value="CAQ87775.1"/>
    <property type="molecule type" value="Genomic_DNA"/>
</dbReference>
<dbReference type="RefSeq" id="WP_000622418.1">
    <property type="nucleotide sequence ID" value="NC_011740.1"/>
</dbReference>
<dbReference type="SMR" id="B7LWB1"/>
<dbReference type="GeneID" id="93777253"/>
<dbReference type="KEGG" id="efe:EFER_0194"/>
<dbReference type="HOGENOM" id="CLU_073981_2_1_6"/>
<dbReference type="OrthoDB" id="9804006at2"/>
<dbReference type="Proteomes" id="UP000000745">
    <property type="component" value="Chromosome"/>
</dbReference>
<dbReference type="GO" id="GO:0005829">
    <property type="term" value="C:cytosol"/>
    <property type="evidence" value="ECO:0007669"/>
    <property type="project" value="GOC"/>
</dbReference>
<dbReference type="GO" id="GO:0043023">
    <property type="term" value="F:ribosomal large subunit binding"/>
    <property type="evidence" value="ECO:0007669"/>
    <property type="project" value="TreeGrafter"/>
</dbReference>
<dbReference type="GO" id="GO:0002184">
    <property type="term" value="P:cytoplasmic translational termination"/>
    <property type="evidence" value="ECO:0007669"/>
    <property type="project" value="TreeGrafter"/>
</dbReference>
<dbReference type="CDD" id="cd00520">
    <property type="entry name" value="RRF"/>
    <property type="match status" value="1"/>
</dbReference>
<dbReference type="FunFam" id="1.10.132.20:FF:000001">
    <property type="entry name" value="Ribosome-recycling factor"/>
    <property type="match status" value="1"/>
</dbReference>
<dbReference type="FunFam" id="3.30.1360.40:FF:000001">
    <property type="entry name" value="Ribosome-recycling factor"/>
    <property type="match status" value="1"/>
</dbReference>
<dbReference type="Gene3D" id="3.30.1360.40">
    <property type="match status" value="1"/>
</dbReference>
<dbReference type="Gene3D" id="1.10.132.20">
    <property type="entry name" value="Ribosome-recycling factor"/>
    <property type="match status" value="1"/>
</dbReference>
<dbReference type="HAMAP" id="MF_00040">
    <property type="entry name" value="RRF"/>
    <property type="match status" value="1"/>
</dbReference>
<dbReference type="InterPro" id="IPR002661">
    <property type="entry name" value="Ribosome_recyc_fac"/>
</dbReference>
<dbReference type="InterPro" id="IPR023584">
    <property type="entry name" value="Ribosome_recyc_fac_dom"/>
</dbReference>
<dbReference type="InterPro" id="IPR036191">
    <property type="entry name" value="RRF_sf"/>
</dbReference>
<dbReference type="NCBIfam" id="TIGR00496">
    <property type="entry name" value="frr"/>
    <property type="match status" value="1"/>
</dbReference>
<dbReference type="PANTHER" id="PTHR20982:SF3">
    <property type="entry name" value="MITOCHONDRIAL RIBOSOME RECYCLING FACTOR PSEUDO 1"/>
    <property type="match status" value="1"/>
</dbReference>
<dbReference type="PANTHER" id="PTHR20982">
    <property type="entry name" value="RIBOSOME RECYCLING FACTOR"/>
    <property type="match status" value="1"/>
</dbReference>
<dbReference type="Pfam" id="PF01765">
    <property type="entry name" value="RRF"/>
    <property type="match status" value="1"/>
</dbReference>
<dbReference type="SUPFAM" id="SSF55194">
    <property type="entry name" value="Ribosome recycling factor, RRF"/>
    <property type="match status" value="1"/>
</dbReference>
<accession>B7LWB1</accession>
<comment type="function">
    <text evidence="1">Responsible for the release of ribosomes from messenger RNA at the termination of protein biosynthesis. May increase the efficiency of translation by recycling ribosomes from one round of translation to another.</text>
</comment>
<comment type="subcellular location">
    <subcellularLocation>
        <location evidence="1">Cytoplasm</location>
    </subcellularLocation>
</comment>
<comment type="similarity">
    <text evidence="1">Belongs to the RRF family.</text>
</comment>
<sequence>MISDIRKDAEVRMDKCVEAFKTQISKIRTGRASPSLLDGIVVEYYGTPTPLRQLASVTVEDSRTLKINVFDRSMSPAVEKAIMASDLGLNPNSAGSDIRVPLPPLTEERRKDLTKIVRGEAEQARVAVRNVRRDANDKVKALLKDKEISEDDDRRSQDDVQKLTDAAIKKIEAALADKEAELMQF</sequence>
<feature type="chain" id="PRO_1000194931" description="Ribosome-recycling factor">
    <location>
        <begin position="1"/>
        <end position="185"/>
    </location>
</feature>
<feature type="modified residue" description="N6-acetyllysine" evidence="1">
    <location>
        <position position="162"/>
    </location>
</feature>
<evidence type="ECO:0000255" key="1">
    <source>
        <dbReference type="HAMAP-Rule" id="MF_00040"/>
    </source>
</evidence>
<keyword id="KW-0007">Acetylation</keyword>
<keyword id="KW-0963">Cytoplasm</keyword>
<keyword id="KW-0648">Protein biosynthesis</keyword>
<organism>
    <name type="scientific">Escherichia fergusonii (strain ATCC 35469 / DSM 13698 / CCUG 18766 / IAM 14443 / JCM 21226 / LMG 7866 / NBRC 102419 / NCTC 12128 / CDC 0568-73)</name>
    <dbReference type="NCBI Taxonomy" id="585054"/>
    <lineage>
        <taxon>Bacteria</taxon>
        <taxon>Pseudomonadati</taxon>
        <taxon>Pseudomonadota</taxon>
        <taxon>Gammaproteobacteria</taxon>
        <taxon>Enterobacterales</taxon>
        <taxon>Enterobacteriaceae</taxon>
        <taxon>Escherichia</taxon>
    </lineage>
</organism>
<protein>
    <recommendedName>
        <fullName evidence="1">Ribosome-recycling factor</fullName>
        <shortName evidence="1">RRF</shortName>
    </recommendedName>
    <alternativeName>
        <fullName evidence="1">Ribosome-releasing factor</fullName>
    </alternativeName>
</protein>
<reference key="1">
    <citation type="journal article" date="2009" name="PLoS Genet.">
        <title>Organised genome dynamics in the Escherichia coli species results in highly diverse adaptive paths.</title>
        <authorList>
            <person name="Touchon M."/>
            <person name="Hoede C."/>
            <person name="Tenaillon O."/>
            <person name="Barbe V."/>
            <person name="Baeriswyl S."/>
            <person name="Bidet P."/>
            <person name="Bingen E."/>
            <person name="Bonacorsi S."/>
            <person name="Bouchier C."/>
            <person name="Bouvet O."/>
            <person name="Calteau A."/>
            <person name="Chiapello H."/>
            <person name="Clermont O."/>
            <person name="Cruveiller S."/>
            <person name="Danchin A."/>
            <person name="Diard M."/>
            <person name="Dossat C."/>
            <person name="Karoui M.E."/>
            <person name="Frapy E."/>
            <person name="Garry L."/>
            <person name="Ghigo J.M."/>
            <person name="Gilles A.M."/>
            <person name="Johnson J."/>
            <person name="Le Bouguenec C."/>
            <person name="Lescat M."/>
            <person name="Mangenot S."/>
            <person name="Martinez-Jehanne V."/>
            <person name="Matic I."/>
            <person name="Nassif X."/>
            <person name="Oztas S."/>
            <person name="Petit M.A."/>
            <person name="Pichon C."/>
            <person name="Rouy Z."/>
            <person name="Ruf C.S."/>
            <person name="Schneider D."/>
            <person name="Tourret J."/>
            <person name="Vacherie B."/>
            <person name="Vallenet D."/>
            <person name="Medigue C."/>
            <person name="Rocha E.P.C."/>
            <person name="Denamur E."/>
        </authorList>
    </citation>
    <scope>NUCLEOTIDE SEQUENCE [LARGE SCALE GENOMIC DNA]</scope>
    <source>
        <strain>ATCC 35469 / DSM 13698 / BCRC 15582 / CCUG 18766 / IAM 14443 / JCM 21226 / LMG 7866 / NBRC 102419 / NCTC 12128 / CDC 0568-73</strain>
    </source>
</reference>